<reference key="1">
    <citation type="journal article" date="2004" name="Nat. Biotechnol.">
        <title>The genome sequence of the extreme thermophile Thermus thermophilus.</title>
        <authorList>
            <person name="Henne A."/>
            <person name="Brueggemann H."/>
            <person name="Raasch C."/>
            <person name="Wiezer A."/>
            <person name="Hartsch T."/>
            <person name="Liesegang H."/>
            <person name="Johann A."/>
            <person name="Lienard T."/>
            <person name="Gohl O."/>
            <person name="Martinez-Arias R."/>
            <person name="Jacobi C."/>
            <person name="Starkuviene V."/>
            <person name="Schlenczeck S."/>
            <person name="Dencker S."/>
            <person name="Huber R."/>
            <person name="Klenk H.-P."/>
            <person name="Kramer W."/>
            <person name="Merkl R."/>
            <person name="Gottschalk G."/>
            <person name="Fritz H.-J."/>
        </authorList>
    </citation>
    <scope>NUCLEOTIDE SEQUENCE [LARGE SCALE GENOMIC DNA]</scope>
    <source>
        <strain>ATCC BAA-163 / DSM 7039 / HB27</strain>
    </source>
</reference>
<sequence>MAGVKERAVLVLEDGTVYHGYAFGARGKTVGEVVFNTAQTGYQEIMTDPSYHGQIVVMTYPHQGNYGVNVYDMQSNRPWVRGFVAKEFSRVASNPRAQQTIGEFMEFYGVVGIEGIDTRALVRKIREGGVLKGTIAHASLFGAPDHAFTQEELEALRREAQAWTDIDGRDMTPEVSTPLPYAWPTLKSGRRIVVMDFGIKHAIVENLAALGFEVIVVPGKTPAHQIMALEPHGLLISNGPGDPTMPRYAHETIWKLMGLLPTFGICLGHQLLALAAGGRTFKMKFGHRGANHPVKNLQTGKIEITSQNHGYAVDIDSLKDFRPTHVNLNDGTLEGMAHARYPVFSVQYHPEAAPGPHDALYLFRRFLEEVEAFHGATGLPVEKQRADQHGI</sequence>
<proteinExistence type="inferred from homology"/>
<feature type="chain" id="PRO_0000112341" description="Carbamoyl phosphate synthase small chain">
    <location>
        <begin position="1"/>
        <end position="391"/>
    </location>
</feature>
<feature type="domain" description="Glutamine amidotransferase type-1" evidence="1">
    <location>
        <begin position="191"/>
        <end position="376"/>
    </location>
</feature>
<feature type="region of interest" description="CPSase" evidence="1">
    <location>
        <begin position="1"/>
        <end position="187"/>
    </location>
</feature>
<feature type="active site" description="Nucleophile" evidence="1">
    <location>
        <position position="266"/>
    </location>
</feature>
<feature type="active site" evidence="1">
    <location>
        <position position="349"/>
    </location>
</feature>
<feature type="active site" evidence="1">
    <location>
        <position position="351"/>
    </location>
</feature>
<feature type="binding site" evidence="1">
    <location>
        <position position="50"/>
    </location>
    <ligand>
        <name>L-glutamine</name>
        <dbReference type="ChEBI" id="CHEBI:58359"/>
    </ligand>
</feature>
<feature type="binding site" evidence="1">
    <location>
        <position position="239"/>
    </location>
    <ligand>
        <name>L-glutamine</name>
        <dbReference type="ChEBI" id="CHEBI:58359"/>
    </ligand>
</feature>
<feature type="binding site" evidence="1">
    <location>
        <position position="241"/>
    </location>
    <ligand>
        <name>L-glutamine</name>
        <dbReference type="ChEBI" id="CHEBI:58359"/>
    </ligand>
</feature>
<feature type="binding site" evidence="1">
    <location>
        <position position="267"/>
    </location>
    <ligand>
        <name>L-glutamine</name>
        <dbReference type="ChEBI" id="CHEBI:58359"/>
    </ligand>
</feature>
<feature type="binding site" evidence="1">
    <location>
        <position position="270"/>
    </location>
    <ligand>
        <name>L-glutamine</name>
        <dbReference type="ChEBI" id="CHEBI:58359"/>
    </ligand>
</feature>
<feature type="binding site" evidence="1">
    <location>
        <position position="308"/>
    </location>
    <ligand>
        <name>L-glutamine</name>
        <dbReference type="ChEBI" id="CHEBI:58359"/>
    </ligand>
</feature>
<feature type="binding site" evidence="1">
    <location>
        <position position="310"/>
    </location>
    <ligand>
        <name>L-glutamine</name>
        <dbReference type="ChEBI" id="CHEBI:58359"/>
    </ligand>
</feature>
<feature type="binding site" evidence="1">
    <location>
        <position position="311"/>
    </location>
    <ligand>
        <name>L-glutamine</name>
        <dbReference type="ChEBI" id="CHEBI:58359"/>
    </ligand>
</feature>
<comment type="function">
    <text evidence="1">Small subunit of the glutamine-dependent carbamoyl phosphate synthetase (CPSase). CPSase catalyzes the formation of carbamoyl phosphate from the ammonia moiety of glutamine, carbonate, and phosphate donated by ATP, constituting the first step of 2 biosynthetic pathways, one leading to arginine and/or urea and the other to pyrimidine nucleotides. The small subunit (glutamine amidotransferase) binds and cleaves glutamine to supply the large subunit with the substrate ammonia.</text>
</comment>
<comment type="catalytic activity">
    <reaction evidence="1">
        <text>hydrogencarbonate + L-glutamine + 2 ATP + H2O = carbamoyl phosphate + L-glutamate + 2 ADP + phosphate + 2 H(+)</text>
        <dbReference type="Rhea" id="RHEA:18633"/>
        <dbReference type="ChEBI" id="CHEBI:15377"/>
        <dbReference type="ChEBI" id="CHEBI:15378"/>
        <dbReference type="ChEBI" id="CHEBI:17544"/>
        <dbReference type="ChEBI" id="CHEBI:29985"/>
        <dbReference type="ChEBI" id="CHEBI:30616"/>
        <dbReference type="ChEBI" id="CHEBI:43474"/>
        <dbReference type="ChEBI" id="CHEBI:58228"/>
        <dbReference type="ChEBI" id="CHEBI:58359"/>
        <dbReference type="ChEBI" id="CHEBI:456216"/>
        <dbReference type="EC" id="6.3.5.5"/>
    </reaction>
</comment>
<comment type="catalytic activity">
    <molecule>Carbamoyl phosphate synthase small chain</molecule>
    <reaction evidence="1">
        <text>L-glutamine + H2O = L-glutamate + NH4(+)</text>
        <dbReference type="Rhea" id="RHEA:15889"/>
        <dbReference type="ChEBI" id="CHEBI:15377"/>
        <dbReference type="ChEBI" id="CHEBI:28938"/>
        <dbReference type="ChEBI" id="CHEBI:29985"/>
        <dbReference type="ChEBI" id="CHEBI:58359"/>
    </reaction>
</comment>
<comment type="pathway">
    <text evidence="1">Amino-acid biosynthesis; L-arginine biosynthesis; carbamoyl phosphate from bicarbonate: step 1/1.</text>
</comment>
<comment type="pathway">
    <text evidence="1">Pyrimidine metabolism; UMP biosynthesis via de novo pathway; (S)-dihydroorotate from bicarbonate: step 1/3.</text>
</comment>
<comment type="subunit">
    <text evidence="1">Composed of two chains; the small (or glutamine) chain promotes the hydrolysis of glutamine to ammonia, which is used by the large (or ammonia) chain to synthesize carbamoyl phosphate. Tetramer of heterodimers (alpha,beta)4.</text>
</comment>
<comment type="similarity">
    <text evidence="1">Belongs to the CarA family.</text>
</comment>
<gene>
    <name evidence="1" type="primary">carA</name>
    <name type="ordered locus">TT_C1706</name>
</gene>
<organism>
    <name type="scientific">Thermus thermophilus (strain ATCC BAA-163 / DSM 7039 / HB27)</name>
    <dbReference type="NCBI Taxonomy" id="262724"/>
    <lineage>
        <taxon>Bacteria</taxon>
        <taxon>Thermotogati</taxon>
        <taxon>Deinococcota</taxon>
        <taxon>Deinococci</taxon>
        <taxon>Thermales</taxon>
        <taxon>Thermaceae</taxon>
        <taxon>Thermus</taxon>
    </lineage>
</organism>
<evidence type="ECO:0000255" key="1">
    <source>
        <dbReference type="HAMAP-Rule" id="MF_01209"/>
    </source>
</evidence>
<name>CARA_THET2</name>
<protein>
    <recommendedName>
        <fullName evidence="1">Carbamoyl phosphate synthase small chain</fullName>
        <ecNumber evidence="1">6.3.5.5</ecNumber>
    </recommendedName>
    <alternativeName>
        <fullName evidence="1">Carbamoyl phosphate synthetase glutamine chain</fullName>
    </alternativeName>
</protein>
<keyword id="KW-0028">Amino-acid biosynthesis</keyword>
<keyword id="KW-0055">Arginine biosynthesis</keyword>
<keyword id="KW-0067">ATP-binding</keyword>
<keyword id="KW-0315">Glutamine amidotransferase</keyword>
<keyword id="KW-0436">Ligase</keyword>
<keyword id="KW-0547">Nucleotide-binding</keyword>
<keyword id="KW-0665">Pyrimidine biosynthesis</keyword>
<accession>Q72GZ0</accession>
<dbReference type="EC" id="6.3.5.5" evidence="1"/>
<dbReference type="EMBL" id="AE017221">
    <property type="protein sequence ID" value="AAS82048.1"/>
    <property type="molecule type" value="Genomic_DNA"/>
</dbReference>
<dbReference type="RefSeq" id="WP_011174069.1">
    <property type="nucleotide sequence ID" value="NC_005835.1"/>
</dbReference>
<dbReference type="SMR" id="Q72GZ0"/>
<dbReference type="MEROPS" id="C26.A04"/>
<dbReference type="GeneID" id="3169366"/>
<dbReference type="KEGG" id="tth:TT_C1706"/>
<dbReference type="eggNOG" id="COG0505">
    <property type="taxonomic scope" value="Bacteria"/>
</dbReference>
<dbReference type="HOGENOM" id="CLU_035901_2_1_0"/>
<dbReference type="OrthoDB" id="9804328at2"/>
<dbReference type="UniPathway" id="UPA00068">
    <property type="reaction ID" value="UER00171"/>
</dbReference>
<dbReference type="UniPathway" id="UPA00070">
    <property type="reaction ID" value="UER00115"/>
</dbReference>
<dbReference type="Proteomes" id="UP000000592">
    <property type="component" value="Chromosome"/>
</dbReference>
<dbReference type="GO" id="GO:0005524">
    <property type="term" value="F:ATP binding"/>
    <property type="evidence" value="ECO:0007669"/>
    <property type="project" value="UniProtKB-UniRule"/>
</dbReference>
<dbReference type="GO" id="GO:0004088">
    <property type="term" value="F:carbamoyl-phosphate synthase (glutamine-hydrolyzing) activity"/>
    <property type="evidence" value="ECO:0007669"/>
    <property type="project" value="UniProtKB-UniRule"/>
</dbReference>
<dbReference type="GO" id="GO:0004359">
    <property type="term" value="F:glutaminase activity"/>
    <property type="evidence" value="ECO:0007669"/>
    <property type="project" value="RHEA"/>
</dbReference>
<dbReference type="GO" id="GO:0006207">
    <property type="term" value="P:'de novo' pyrimidine nucleobase biosynthetic process"/>
    <property type="evidence" value="ECO:0007669"/>
    <property type="project" value="InterPro"/>
</dbReference>
<dbReference type="GO" id="GO:0044205">
    <property type="term" value="P:'de novo' UMP biosynthetic process"/>
    <property type="evidence" value="ECO:0007669"/>
    <property type="project" value="UniProtKB-UniRule"/>
</dbReference>
<dbReference type="GO" id="GO:0006541">
    <property type="term" value="P:glutamine metabolic process"/>
    <property type="evidence" value="ECO:0007669"/>
    <property type="project" value="InterPro"/>
</dbReference>
<dbReference type="GO" id="GO:0006526">
    <property type="term" value="P:L-arginine biosynthetic process"/>
    <property type="evidence" value="ECO:0007669"/>
    <property type="project" value="UniProtKB-UniRule"/>
</dbReference>
<dbReference type="CDD" id="cd01744">
    <property type="entry name" value="GATase1_CPSase"/>
    <property type="match status" value="1"/>
</dbReference>
<dbReference type="FunFam" id="3.50.30.20:FF:000001">
    <property type="entry name" value="Carbamoyl-phosphate synthase small chain"/>
    <property type="match status" value="1"/>
</dbReference>
<dbReference type="Gene3D" id="3.40.50.880">
    <property type="match status" value="1"/>
</dbReference>
<dbReference type="Gene3D" id="3.50.30.20">
    <property type="entry name" value="Carbamoyl-phosphate synthase small subunit, N-terminal domain"/>
    <property type="match status" value="1"/>
</dbReference>
<dbReference type="HAMAP" id="MF_01209">
    <property type="entry name" value="CPSase_S_chain"/>
    <property type="match status" value="1"/>
</dbReference>
<dbReference type="InterPro" id="IPR050472">
    <property type="entry name" value="Anth_synth/Amidotransfase"/>
</dbReference>
<dbReference type="InterPro" id="IPR006274">
    <property type="entry name" value="CarbamoylP_synth_ssu"/>
</dbReference>
<dbReference type="InterPro" id="IPR002474">
    <property type="entry name" value="CarbamoylP_synth_ssu_N"/>
</dbReference>
<dbReference type="InterPro" id="IPR036480">
    <property type="entry name" value="CarbP_synth_ssu_N_sf"/>
</dbReference>
<dbReference type="InterPro" id="IPR029062">
    <property type="entry name" value="Class_I_gatase-like"/>
</dbReference>
<dbReference type="InterPro" id="IPR035686">
    <property type="entry name" value="CPSase_GATase1"/>
</dbReference>
<dbReference type="InterPro" id="IPR017926">
    <property type="entry name" value="GATASE"/>
</dbReference>
<dbReference type="NCBIfam" id="TIGR01368">
    <property type="entry name" value="CPSaseIIsmall"/>
    <property type="match status" value="1"/>
</dbReference>
<dbReference type="NCBIfam" id="NF009475">
    <property type="entry name" value="PRK12838.1"/>
    <property type="match status" value="1"/>
</dbReference>
<dbReference type="PANTHER" id="PTHR43418:SF7">
    <property type="entry name" value="CARBAMOYL-PHOSPHATE SYNTHASE SMALL CHAIN"/>
    <property type="match status" value="1"/>
</dbReference>
<dbReference type="PANTHER" id="PTHR43418">
    <property type="entry name" value="MULTIFUNCTIONAL TRYPTOPHAN BIOSYNTHESIS PROTEIN-RELATED"/>
    <property type="match status" value="1"/>
</dbReference>
<dbReference type="Pfam" id="PF00988">
    <property type="entry name" value="CPSase_sm_chain"/>
    <property type="match status" value="1"/>
</dbReference>
<dbReference type="Pfam" id="PF00117">
    <property type="entry name" value="GATase"/>
    <property type="match status" value="1"/>
</dbReference>
<dbReference type="PRINTS" id="PR00097">
    <property type="entry name" value="ANTSNTHASEII"/>
</dbReference>
<dbReference type="PRINTS" id="PR00099">
    <property type="entry name" value="CPSGATASE"/>
</dbReference>
<dbReference type="PRINTS" id="PR00096">
    <property type="entry name" value="GATASE"/>
</dbReference>
<dbReference type="SMART" id="SM01097">
    <property type="entry name" value="CPSase_sm_chain"/>
    <property type="match status" value="1"/>
</dbReference>
<dbReference type="SUPFAM" id="SSF52021">
    <property type="entry name" value="Carbamoyl phosphate synthetase, small subunit N-terminal domain"/>
    <property type="match status" value="1"/>
</dbReference>
<dbReference type="SUPFAM" id="SSF52317">
    <property type="entry name" value="Class I glutamine amidotransferase-like"/>
    <property type="match status" value="1"/>
</dbReference>
<dbReference type="PROSITE" id="PS51273">
    <property type="entry name" value="GATASE_TYPE_1"/>
    <property type="match status" value="1"/>
</dbReference>